<reference key="1">
    <citation type="journal article" date="2009" name="BMC Genomics">
        <title>Metabolic analysis of the soil microbe Dechloromonas aromatica str. RCB: indications of a surprisingly complex life-style and cryptic anaerobic pathways for aromatic degradation.</title>
        <authorList>
            <person name="Salinero K.K."/>
            <person name="Keller K."/>
            <person name="Feil W.S."/>
            <person name="Feil H."/>
            <person name="Trong S."/>
            <person name="Di Bartolo G."/>
            <person name="Lapidus A."/>
        </authorList>
    </citation>
    <scope>NUCLEOTIDE SEQUENCE [LARGE SCALE GENOMIC DNA]</scope>
    <source>
        <strain>RCB</strain>
    </source>
</reference>
<accession>Q47HG6</accession>
<protein>
    <recommendedName>
        <fullName evidence="1">NADH-quinone oxidoreductase subunit K</fullName>
        <ecNumber evidence="1">7.1.1.-</ecNumber>
    </recommendedName>
    <alternativeName>
        <fullName evidence="1">NADH dehydrogenase I subunit K</fullName>
    </alternativeName>
    <alternativeName>
        <fullName evidence="1">NDH-1 subunit K</fullName>
    </alternativeName>
</protein>
<sequence>MLTLSLSHFLILGAILFAISVVGIFLNRKNLLVLLMAIELMLLAVNMNFVAFSHYLQDLSGQIFVFFILTVAAAESAIGLAILIVLFRNLKSIHVDDLGSLKG</sequence>
<gene>
    <name evidence="1" type="primary">nuoK</name>
    <name type="ordered locus">Daro_0959</name>
</gene>
<name>NUOK_DECAR</name>
<organism>
    <name type="scientific">Dechloromonas aromatica (strain RCB)</name>
    <dbReference type="NCBI Taxonomy" id="159087"/>
    <lineage>
        <taxon>Bacteria</taxon>
        <taxon>Pseudomonadati</taxon>
        <taxon>Pseudomonadota</taxon>
        <taxon>Betaproteobacteria</taxon>
        <taxon>Rhodocyclales</taxon>
        <taxon>Azonexaceae</taxon>
        <taxon>Dechloromonas</taxon>
    </lineage>
</organism>
<dbReference type="EC" id="7.1.1.-" evidence="1"/>
<dbReference type="EMBL" id="CP000089">
    <property type="protein sequence ID" value="AAZ45715.1"/>
    <property type="molecule type" value="Genomic_DNA"/>
</dbReference>
<dbReference type="SMR" id="Q47HG6"/>
<dbReference type="STRING" id="159087.Daro_0959"/>
<dbReference type="KEGG" id="dar:Daro_0959"/>
<dbReference type="eggNOG" id="COG0713">
    <property type="taxonomic scope" value="Bacteria"/>
</dbReference>
<dbReference type="HOGENOM" id="CLU_144724_2_0_4"/>
<dbReference type="OrthoDB" id="9801357at2"/>
<dbReference type="GO" id="GO:0030964">
    <property type="term" value="C:NADH dehydrogenase complex"/>
    <property type="evidence" value="ECO:0007669"/>
    <property type="project" value="TreeGrafter"/>
</dbReference>
<dbReference type="GO" id="GO:0005886">
    <property type="term" value="C:plasma membrane"/>
    <property type="evidence" value="ECO:0007669"/>
    <property type="project" value="UniProtKB-SubCell"/>
</dbReference>
<dbReference type="GO" id="GO:0050136">
    <property type="term" value="F:NADH:ubiquinone reductase (non-electrogenic) activity"/>
    <property type="evidence" value="ECO:0007669"/>
    <property type="project" value="UniProtKB-UniRule"/>
</dbReference>
<dbReference type="GO" id="GO:0048038">
    <property type="term" value="F:quinone binding"/>
    <property type="evidence" value="ECO:0007669"/>
    <property type="project" value="UniProtKB-KW"/>
</dbReference>
<dbReference type="GO" id="GO:0042773">
    <property type="term" value="P:ATP synthesis coupled electron transport"/>
    <property type="evidence" value="ECO:0007669"/>
    <property type="project" value="InterPro"/>
</dbReference>
<dbReference type="FunFam" id="1.10.287.3510:FF:000001">
    <property type="entry name" value="NADH-quinone oxidoreductase subunit K"/>
    <property type="match status" value="1"/>
</dbReference>
<dbReference type="Gene3D" id="1.10.287.3510">
    <property type="match status" value="1"/>
</dbReference>
<dbReference type="HAMAP" id="MF_01456">
    <property type="entry name" value="NDH1_NuoK"/>
    <property type="match status" value="1"/>
</dbReference>
<dbReference type="InterPro" id="IPR001133">
    <property type="entry name" value="NADH_UbQ_OxRdtase_chain4L/K"/>
</dbReference>
<dbReference type="InterPro" id="IPR039428">
    <property type="entry name" value="NUOK/Mnh_C1-like"/>
</dbReference>
<dbReference type="NCBIfam" id="NF004320">
    <property type="entry name" value="PRK05715.1-2"/>
    <property type="match status" value="1"/>
</dbReference>
<dbReference type="NCBIfam" id="NF004321">
    <property type="entry name" value="PRK05715.1-3"/>
    <property type="match status" value="1"/>
</dbReference>
<dbReference type="NCBIfam" id="NF004323">
    <property type="entry name" value="PRK05715.1-5"/>
    <property type="match status" value="1"/>
</dbReference>
<dbReference type="PANTHER" id="PTHR11434:SF21">
    <property type="entry name" value="NADH DEHYDROGENASE SUBUNIT 4L-RELATED"/>
    <property type="match status" value="1"/>
</dbReference>
<dbReference type="PANTHER" id="PTHR11434">
    <property type="entry name" value="NADH-UBIQUINONE OXIDOREDUCTASE SUBUNIT ND4L"/>
    <property type="match status" value="1"/>
</dbReference>
<dbReference type="Pfam" id="PF00420">
    <property type="entry name" value="Oxidored_q2"/>
    <property type="match status" value="1"/>
</dbReference>
<feature type="chain" id="PRO_0000390025" description="NADH-quinone oxidoreductase subunit K">
    <location>
        <begin position="1"/>
        <end position="103"/>
    </location>
</feature>
<feature type="transmembrane region" description="Helical" evidence="1">
    <location>
        <begin position="6"/>
        <end position="26"/>
    </location>
</feature>
<feature type="transmembrane region" description="Helical" evidence="1">
    <location>
        <begin position="32"/>
        <end position="52"/>
    </location>
</feature>
<feature type="transmembrane region" description="Helical" evidence="1">
    <location>
        <begin position="63"/>
        <end position="83"/>
    </location>
</feature>
<proteinExistence type="inferred from homology"/>
<evidence type="ECO:0000255" key="1">
    <source>
        <dbReference type="HAMAP-Rule" id="MF_01456"/>
    </source>
</evidence>
<comment type="function">
    <text evidence="1">NDH-1 shuttles electrons from NADH, via FMN and iron-sulfur (Fe-S) centers, to quinones in the respiratory chain. The immediate electron acceptor for the enzyme in this species is believed to be ubiquinone. Couples the redox reaction to proton translocation (for every two electrons transferred, four hydrogen ions are translocated across the cytoplasmic membrane), and thus conserves the redox energy in a proton gradient.</text>
</comment>
<comment type="catalytic activity">
    <reaction evidence="1">
        <text>a quinone + NADH + 5 H(+)(in) = a quinol + NAD(+) + 4 H(+)(out)</text>
        <dbReference type="Rhea" id="RHEA:57888"/>
        <dbReference type="ChEBI" id="CHEBI:15378"/>
        <dbReference type="ChEBI" id="CHEBI:24646"/>
        <dbReference type="ChEBI" id="CHEBI:57540"/>
        <dbReference type="ChEBI" id="CHEBI:57945"/>
        <dbReference type="ChEBI" id="CHEBI:132124"/>
    </reaction>
</comment>
<comment type="subunit">
    <text evidence="1">NDH-1 is composed of 14 different subunits. Subunits NuoA, H, J, K, L, M, N constitute the membrane sector of the complex.</text>
</comment>
<comment type="subcellular location">
    <subcellularLocation>
        <location evidence="1">Cell inner membrane</location>
        <topology evidence="1">Multi-pass membrane protein</topology>
    </subcellularLocation>
</comment>
<comment type="similarity">
    <text evidence="1">Belongs to the complex I subunit 4L family.</text>
</comment>
<keyword id="KW-0997">Cell inner membrane</keyword>
<keyword id="KW-1003">Cell membrane</keyword>
<keyword id="KW-0472">Membrane</keyword>
<keyword id="KW-0520">NAD</keyword>
<keyword id="KW-0874">Quinone</keyword>
<keyword id="KW-1278">Translocase</keyword>
<keyword id="KW-0812">Transmembrane</keyword>
<keyword id="KW-1133">Transmembrane helix</keyword>
<keyword id="KW-0813">Transport</keyword>
<keyword id="KW-0830">Ubiquinone</keyword>